<comment type="function">
    <text evidence="1">Catalyzes the interconversion of 2-phosphoglycerate and 3-phosphoglycerate.</text>
</comment>
<comment type="catalytic activity">
    <reaction evidence="1">
        <text>(2R)-2-phosphoglycerate = (2R)-3-phosphoglycerate</text>
        <dbReference type="Rhea" id="RHEA:15901"/>
        <dbReference type="ChEBI" id="CHEBI:58272"/>
        <dbReference type="ChEBI" id="CHEBI:58289"/>
        <dbReference type="EC" id="5.4.2.11"/>
    </reaction>
</comment>
<comment type="pathway">
    <text evidence="1">Carbohydrate degradation; glycolysis; pyruvate from D-glyceraldehyde 3-phosphate: step 3/5.</text>
</comment>
<comment type="similarity">
    <text evidence="1">Belongs to the phosphoglycerate mutase family. BPG-dependent PGAM subfamily.</text>
</comment>
<proteinExistence type="inferred from homology"/>
<accession>Q6G6Q5</accession>
<gene>
    <name evidence="1" type="primary">gpmA</name>
    <name type="ordered locus">SAS2307</name>
</gene>
<dbReference type="EC" id="5.4.2.11" evidence="1"/>
<dbReference type="EMBL" id="BX571857">
    <property type="protein sequence ID" value="CAG44120.1"/>
    <property type="molecule type" value="Genomic_DNA"/>
</dbReference>
<dbReference type="RefSeq" id="WP_001125208.1">
    <property type="nucleotide sequence ID" value="NC_002953.3"/>
</dbReference>
<dbReference type="SMR" id="Q6G6Q5"/>
<dbReference type="KEGG" id="sas:SAS2307"/>
<dbReference type="HOGENOM" id="CLU_033323_1_5_9"/>
<dbReference type="UniPathway" id="UPA00109">
    <property type="reaction ID" value="UER00186"/>
</dbReference>
<dbReference type="GO" id="GO:0004619">
    <property type="term" value="F:phosphoglycerate mutase activity"/>
    <property type="evidence" value="ECO:0007669"/>
    <property type="project" value="UniProtKB-EC"/>
</dbReference>
<dbReference type="GO" id="GO:0006094">
    <property type="term" value="P:gluconeogenesis"/>
    <property type="evidence" value="ECO:0007669"/>
    <property type="project" value="UniProtKB-UniRule"/>
</dbReference>
<dbReference type="GO" id="GO:0006096">
    <property type="term" value="P:glycolytic process"/>
    <property type="evidence" value="ECO:0007669"/>
    <property type="project" value="UniProtKB-UniRule"/>
</dbReference>
<dbReference type="CDD" id="cd07067">
    <property type="entry name" value="HP_PGM_like"/>
    <property type="match status" value="1"/>
</dbReference>
<dbReference type="FunFam" id="3.40.50.1240:FF:000003">
    <property type="entry name" value="2,3-bisphosphoglycerate-dependent phosphoglycerate mutase"/>
    <property type="match status" value="1"/>
</dbReference>
<dbReference type="Gene3D" id="3.40.50.1240">
    <property type="entry name" value="Phosphoglycerate mutase-like"/>
    <property type="match status" value="1"/>
</dbReference>
<dbReference type="HAMAP" id="MF_01039">
    <property type="entry name" value="PGAM_GpmA"/>
    <property type="match status" value="1"/>
</dbReference>
<dbReference type="InterPro" id="IPR013078">
    <property type="entry name" value="His_Pase_superF_clade-1"/>
</dbReference>
<dbReference type="InterPro" id="IPR029033">
    <property type="entry name" value="His_PPase_superfam"/>
</dbReference>
<dbReference type="InterPro" id="IPR001345">
    <property type="entry name" value="PG/BPGM_mutase_AS"/>
</dbReference>
<dbReference type="InterPro" id="IPR005952">
    <property type="entry name" value="Phosphogly_mut1"/>
</dbReference>
<dbReference type="NCBIfam" id="TIGR01258">
    <property type="entry name" value="pgm_1"/>
    <property type="match status" value="1"/>
</dbReference>
<dbReference type="NCBIfam" id="NF010713">
    <property type="entry name" value="PRK14115.1"/>
    <property type="match status" value="1"/>
</dbReference>
<dbReference type="NCBIfam" id="NF010717">
    <property type="entry name" value="PRK14119.1"/>
    <property type="match status" value="1"/>
</dbReference>
<dbReference type="PANTHER" id="PTHR11931">
    <property type="entry name" value="PHOSPHOGLYCERATE MUTASE"/>
    <property type="match status" value="1"/>
</dbReference>
<dbReference type="Pfam" id="PF00300">
    <property type="entry name" value="His_Phos_1"/>
    <property type="match status" value="1"/>
</dbReference>
<dbReference type="PIRSF" id="PIRSF000709">
    <property type="entry name" value="6PFK_2-Ptase"/>
    <property type="match status" value="1"/>
</dbReference>
<dbReference type="SMART" id="SM00855">
    <property type="entry name" value="PGAM"/>
    <property type="match status" value="1"/>
</dbReference>
<dbReference type="SUPFAM" id="SSF53254">
    <property type="entry name" value="Phosphoglycerate mutase-like"/>
    <property type="match status" value="1"/>
</dbReference>
<dbReference type="PROSITE" id="PS00175">
    <property type="entry name" value="PG_MUTASE"/>
    <property type="match status" value="1"/>
</dbReference>
<organism>
    <name type="scientific">Staphylococcus aureus (strain MSSA476)</name>
    <dbReference type="NCBI Taxonomy" id="282459"/>
    <lineage>
        <taxon>Bacteria</taxon>
        <taxon>Bacillati</taxon>
        <taxon>Bacillota</taxon>
        <taxon>Bacilli</taxon>
        <taxon>Bacillales</taxon>
        <taxon>Staphylococcaceae</taxon>
        <taxon>Staphylococcus</taxon>
    </lineage>
</organism>
<protein>
    <recommendedName>
        <fullName evidence="1">2,3-bisphosphoglycerate-dependent phosphoglycerate mutase</fullName>
        <shortName evidence="1">BPG-dependent PGAM</shortName>
        <shortName evidence="1">PGAM</shortName>
        <shortName evidence="1">Phosphoglyceromutase</shortName>
        <shortName evidence="1">dPGM</shortName>
        <ecNumber evidence="1">5.4.2.11</ecNumber>
    </recommendedName>
</protein>
<name>GPMA_STAAS</name>
<evidence type="ECO:0000255" key="1">
    <source>
        <dbReference type="HAMAP-Rule" id="MF_01039"/>
    </source>
</evidence>
<feature type="chain" id="PRO_0000179914" description="2,3-bisphosphoglycerate-dependent phosphoglycerate mutase">
    <location>
        <begin position="1"/>
        <end position="228"/>
    </location>
</feature>
<feature type="active site" description="Tele-phosphohistidine intermediate" evidence="1">
    <location>
        <position position="9"/>
    </location>
</feature>
<feature type="active site" description="Proton donor/acceptor" evidence="1">
    <location>
        <position position="87"/>
    </location>
</feature>
<feature type="binding site" evidence="1">
    <location>
        <begin position="8"/>
        <end position="15"/>
    </location>
    <ligand>
        <name>substrate</name>
    </ligand>
</feature>
<feature type="binding site" evidence="1">
    <location>
        <begin position="21"/>
        <end position="22"/>
    </location>
    <ligand>
        <name>substrate</name>
    </ligand>
</feature>
<feature type="binding site" evidence="1">
    <location>
        <position position="60"/>
    </location>
    <ligand>
        <name>substrate</name>
    </ligand>
</feature>
<feature type="binding site" evidence="1">
    <location>
        <begin position="87"/>
        <end position="90"/>
    </location>
    <ligand>
        <name>substrate</name>
    </ligand>
</feature>
<feature type="binding site" evidence="1">
    <location>
        <position position="98"/>
    </location>
    <ligand>
        <name>substrate</name>
    </ligand>
</feature>
<feature type="binding site" evidence="1">
    <location>
        <begin position="114"/>
        <end position="115"/>
    </location>
    <ligand>
        <name>substrate</name>
    </ligand>
</feature>
<feature type="binding site" evidence="1">
    <location>
        <begin position="183"/>
        <end position="184"/>
    </location>
    <ligand>
        <name>substrate</name>
    </ligand>
</feature>
<feature type="site" description="Transition state stabilizer" evidence="1">
    <location>
        <position position="182"/>
    </location>
</feature>
<reference key="1">
    <citation type="journal article" date="2004" name="Proc. Natl. Acad. Sci. U.S.A.">
        <title>Complete genomes of two clinical Staphylococcus aureus strains: evidence for the rapid evolution of virulence and drug resistance.</title>
        <authorList>
            <person name="Holden M.T.G."/>
            <person name="Feil E.J."/>
            <person name="Lindsay J.A."/>
            <person name="Peacock S.J."/>
            <person name="Day N.P.J."/>
            <person name="Enright M.C."/>
            <person name="Foster T.J."/>
            <person name="Moore C.E."/>
            <person name="Hurst L."/>
            <person name="Atkin R."/>
            <person name="Barron A."/>
            <person name="Bason N."/>
            <person name="Bentley S.D."/>
            <person name="Chillingworth C."/>
            <person name="Chillingworth T."/>
            <person name="Churcher C."/>
            <person name="Clark L."/>
            <person name="Corton C."/>
            <person name="Cronin A."/>
            <person name="Doggett J."/>
            <person name="Dowd L."/>
            <person name="Feltwell T."/>
            <person name="Hance Z."/>
            <person name="Harris B."/>
            <person name="Hauser H."/>
            <person name="Holroyd S."/>
            <person name="Jagels K."/>
            <person name="James K.D."/>
            <person name="Lennard N."/>
            <person name="Line A."/>
            <person name="Mayes R."/>
            <person name="Moule S."/>
            <person name="Mungall K."/>
            <person name="Ormond D."/>
            <person name="Quail M.A."/>
            <person name="Rabbinowitsch E."/>
            <person name="Rutherford K.M."/>
            <person name="Sanders M."/>
            <person name="Sharp S."/>
            <person name="Simmonds M."/>
            <person name="Stevens K."/>
            <person name="Whitehead S."/>
            <person name="Barrell B.G."/>
            <person name="Spratt B.G."/>
            <person name="Parkhill J."/>
        </authorList>
    </citation>
    <scope>NUCLEOTIDE SEQUENCE [LARGE SCALE GENOMIC DNA]</scope>
    <source>
        <strain>MSSA476</strain>
    </source>
</reference>
<keyword id="KW-0312">Gluconeogenesis</keyword>
<keyword id="KW-0324">Glycolysis</keyword>
<keyword id="KW-0413">Isomerase</keyword>
<sequence length="228" mass="26680">MPKLILCRHGQSEWNAKNLFTGWEDVNLSEQGINEATRAGEKVRENNIAIDVAFTSLLTRALDTTHYILTESKQQWIPVYKSWRLNERHYGGLQGLNKDDARKEFGEEQVHIWRRSYDVKPPAETEEQREAYLADRRYNHLDKRMMPYSESLKDTLVRVIPFWTDHISQYLLDGQTVLVSAHGNSIRALIKYLEDVSDEDIINYEIKTGAPLVYELTDDLEVIDKYYL</sequence>